<evidence type="ECO:0000250" key="1">
    <source>
        <dbReference type="UniProtKB" id="P03897"/>
    </source>
</evidence>
<evidence type="ECO:0000250" key="2">
    <source>
        <dbReference type="UniProtKB" id="P03898"/>
    </source>
</evidence>
<evidence type="ECO:0000255" key="3"/>
<evidence type="ECO:0000305" key="4"/>
<gene>
    <name evidence="1" type="primary">MT-ND3</name>
    <name type="synonym">MTND3</name>
    <name type="synonym">NADH3</name>
    <name type="synonym">ND3</name>
</gene>
<dbReference type="EC" id="7.1.1.2" evidence="1"/>
<dbReference type="EMBL" id="U83860">
    <property type="protein sequence ID" value="AAB87253.1"/>
    <property type="molecule type" value="Genomic_DNA"/>
</dbReference>
<dbReference type="SMR" id="O21601"/>
<dbReference type="GO" id="GO:0005743">
    <property type="term" value="C:mitochondrial inner membrane"/>
    <property type="evidence" value="ECO:0000250"/>
    <property type="project" value="UniProtKB"/>
</dbReference>
<dbReference type="GO" id="GO:0030964">
    <property type="term" value="C:NADH dehydrogenase complex"/>
    <property type="evidence" value="ECO:0007669"/>
    <property type="project" value="TreeGrafter"/>
</dbReference>
<dbReference type="GO" id="GO:0008137">
    <property type="term" value="F:NADH dehydrogenase (ubiquinone) activity"/>
    <property type="evidence" value="ECO:0000250"/>
    <property type="project" value="UniProtKB"/>
</dbReference>
<dbReference type="GO" id="GO:0006120">
    <property type="term" value="P:mitochondrial electron transport, NADH to ubiquinone"/>
    <property type="evidence" value="ECO:0000250"/>
    <property type="project" value="UniProtKB"/>
</dbReference>
<dbReference type="FunFam" id="1.20.58.1610:FF:000004">
    <property type="entry name" value="NADH-quinone oxidoreductase subunit A"/>
    <property type="match status" value="1"/>
</dbReference>
<dbReference type="Gene3D" id="1.20.58.1610">
    <property type="entry name" value="NADH:ubiquinone/plastoquinone oxidoreductase, chain 3"/>
    <property type="match status" value="1"/>
</dbReference>
<dbReference type="InterPro" id="IPR000440">
    <property type="entry name" value="NADH_UbQ/plastoQ_OxRdtase_su3"/>
</dbReference>
<dbReference type="InterPro" id="IPR038430">
    <property type="entry name" value="NDAH_ubi_oxred_su3_sf"/>
</dbReference>
<dbReference type="PANTHER" id="PTHR11058">
    <property type="entry name" value="NADH-UBIQUINONE OXIDOREDUCTASE CHAIN 3"/>
    <property type="match status" value="1"/>
</dbReference>
<dbReference type="PANTHER" id="PTHR11058:SF9">
    <property type="entry name" value="NADH-UBIQUINONE OXIDOREDUCTASE CHAIN 3"/>
    <property type="match status" value="1"/>
</dbReference>
<dbReference type="Pfam" id="PF00507">
    <property type="entry name" value="Oxidored_q4"/>
    <property type="match status" value="1"/>
</dbReference>
<feature type="chain" id="PRO_0000117785" description="NADH-ubiquinone oxidoreductase chain 3">
    <location>
        <begin position="1"/>
        <end position="115"/>
    </location>
</feature>
<feature type="transmembrane region" description="Helical" evidence="3">
    <location>
        <begin position="4"/>
        <end position="24"/>
    </location>
</feature>
<feature type="transmembrane region" description="Helical" evidence="3">
    <location>
        <begin position="55"/>
        <end position="75"/>
    </location>
</feature>
<feature type="transmembrane region" description="Helical" evidence="3">
    <location>
        <begin position="87"/>
        <end position="107"/>
    </location>
</feature>
<geneLocation type="mitochondrion"/>
<proteinExistence type="inferred from homology"/>
<name>NU3M_OSGBA</name>
<reference key="1">
    <citation type="journal article" date="1998" name="Mol. Biol. Evol.">
        <title>Molecular systematics and paleobiogeography of the South American sigmodontine rodents.</title>
        <authorList>
            <person name="Engel S.R."/>
            <person name="Hogan K.M."/>
            <person name="Taylor J.F."/>
            <person name="Davis S.K."/>
        </authorList>
    </citation>
    <scope>NUCLEOTIDE SEQUENCE [GENOMIC DNA]</scope>
</reference>
<protein>
    <recommendedName>
        <fullName evidence="1">NADH-ubiquinone oxidoreductase chain 3</fullName>
        <ecNumber evidence="1">7.1.1.2</ecNumber>
    </recommendedName>
    <alternativeName>
        <fullName>NADH dehydrogenase subunit 3</fullName>
    </alternativeName>
</protein>
<sequence>MNMFMALSVNIILSTCLILIAFWLPQLNLYNEKANPYECGFDQSSTARLPFSMKFFLVAITFLLFDLEIALLLPLPWAIQMYSINTMMLTAFILVSILALGLAYEWVQKGLEWTE</sequence>
<comment type="function">
    <text evidence="1">Core subunit of the mitochondrial membrane respiratory chain NADH dehydrogenase (Complex I) which catalyzes electron transfer from NADH through the respiratory chain, using ubiquinone as an electron acceptor. Essential for the catalytic activity of complex I.</text>
</comment>
<comment type="catalytic activity">
    <reaction evidence="1">
        <text>a ubiquinone + NADH + 5 H(+)(in) = a ubiquinol + NAD(+) + 4 H(+)(out)</text>
        <dbReference type="Rhea" id="RHEA:29091"/>
        <dbReference type="Rhea" id="RHEA-COMP:9565"/>
        <dbReference type="Rhea" id="RHEA-COMP:9566"/>
        <dbReference type="ChEBI" id="CHEBI:15378"/>
        <dbReference type="ChEBI" id="CHEBI:16389"/>
        <dbReference type="ChEBI" id="CHEBI:17976"/>
        <dbReference type="ChEBI" id="CHEBI:57540"/>
        <dbReference type="ChEBI" id="CHEBI:57945"/>
        <dbReference type="EC" id="7.1.1.2"/>
    </reaction>
</comment>
<comment type="subunit">
    <text evidence="1">Core subunit of respiratory chain NADH dehydrogenase (Complex I) which is composed of 45 different subunits. Interacts with TMEM186. Interacts with TMEM242 (By similarity).</text>
</comment>
<comment type="subcellular location">
    <subcellularLocation>
        <location evidence="2">Mitochondrion inner membrane</location>
        <topology evidence="3">Multi-pass membrane protein</topology>
    </subcellularLocation>
</comment>
<comment type="similarity">
    <text evidence="4">Belongs to the complex I subunit 3 family.</text>
</comment>
<accession>O21601</accession>
<keyword id="KW-0249">Electron transport</keyword>
<keyword id="KW-0472">Membrane</keyword>
<keyword id="KW-0496">Mitochondrion</keyword>
<keyword id="KW-0999">Mitochondrion inner membrane</keyword>
<keyword id="KW-0520">NAD</keyword>
<keyword id="KW-0679">Respiratory chain</keyword>
<keyword id="KW-1278">Translocase</keyword>
<keyword id="KW-0812">Transmembrane</keyword>
<keyword id="KW-1133">Transmembrane helix</keyword>
<keyword id="KW-0813">Transport</keyword>
<keyword id="KW-0830">Ubiquinone</keyword>
<organism>
    <name type="scientific">Osgoodomys banderanus</name>
    <name type="common">Michoacan deer mouse</name>
    <name type="synonym">Peromyscus banderanus</name>
    <dbReference type="NCBI Taxonomy" id="37440"/>
    <lineage>
        <taxon>Eukaryota</taxon>
        <taxon>Metazoa</taxon>
        <taxon>Chordata</taxon>
        <taxon>Craniata</taxon>
        <taxon>Vertebrata</taxon>
        <taxon>Euteleostomi</taxon>
        <taxon>Mammalia</taxon>
        <taxon>Eutheria</taxon>
        <taxon>Euarchontoglires</taxon>
        <taxon>Glires</taxon>
        <taxon>Rodentia</taxon>
        <taxon>Myomorpha</taxon>
        <taxon>Muroidea</taxon>
        <taxon>Cricetidae</taxon>
        <taxon>Neotominae</taxon>
        <taxon>Osgoodomys</taxon>
    </lineage>
</organism>